<evidence type="ECO:0000255" key="1">
    <source>
        <dbReference type="HAMAP-Rule" id="MF_00634"/>
    </source>
</evidence>
<organism>
    <name type="scientific">Rickettsia conorii (strain ATCC VR-613 / Malish 7)</name>
    <dbReference type="NCBI Taxonomy" id="272944"/>
    <lineage>
        <taxon>Bacteria</taxon>
        <taxon>Pseudomonadati</taxon>
        <taxon>Pseudomonadota</taxon>
        <taxon>Alphaproteobacteria</taxon>
        <taxon>Rickettsiales</taxon>
        <taxon>Rickettsiaceae</taxon>
        <taxon>Rickettsieae</taxon>
        <taxon>Rickettsia</taxon>
        <taxon>spotted fever group</taxon>
    </lineage>
</organism>
<sequence length="105" mass="12193">MDKFYNYNSSSHQALLSFKVKPNSKQNLISNFVIINNIPYLKLSIKAIPEQGKANEEIINYLAKEWKLSRSNIEIIKGHTHSLKTILIKNINEDYLNLIINSYIK</sequence>
<name>Y1301_RICCN</name>
<reference key="1">
    <citation type="journal article" date="2001" name="Science">
        <title>Mechanisms of evolution in Rickettsia conorii and R. prowazekii.</title>
        <authorList>
            <person name="Ogata H."/>
            <person name="Audic S."/>
            <person name="Renesto-Audiffren P."/>
            <person name="Fournier P.-E."/>
            <person name="Barbe V."/>
            <person name="Samson D."/>
            <person name="Roux V."/>
            <person name="Cossart P."/>
            <person name="Weissenbach J."/>
            <person name="Claverie J.-M."/>
            <person name="Raoult D."/>
        </authorList>
    </citation>
    <scope>NUCLEOTIDE SEQUENCE [LARGE SCALE GENOMIC DNA]</scope>
    <source>
        <strain>ATCC VR-613 / Malish 7</strain>
    </source>
</reference>
<comment type="similarity">
    <text evidence="1">Belongs to the UPF0235 family.</text>
</comment>
<accession>Q92G24</accession>
<dbReference type="EMBL" id="AE006914">
    <property type="protein sequence ID" value="AAL03839.1"/>
    <property type="molecule type" value="Genomic_DNA"/>
</dbReference>
<dbReference type="PIR" id="E97862">
    <property type="entry name" value="E97862"/>
</dbReference>
<dbReference type="RefSeq" id="WP_004997180.1">
    <property type="nucleotide sequence ID" value="NC_003103.1"/>
</dbReference>
<dbReference type="SMR" id="Q92G24"/>
<dbReference type="KEGG" id="rco:RC1301"/>
<dbReference type="HOGENOM" id="CLU_130694_6_2_5"/>
<dbReference type="Proteomes" id="UP000000816">
    <property type="component" value="Chromosome"/>
</dbReference>
<dbReference type="GO" id="GO:0005737">
    <property type="term" value="C:cytoplasm"/>
    <property type="evidence" value="ECO:0007669"/>
    <property type="project" value="TreeGrafter"/>
</dbReference>
<dbReference type="Gene3D" id="3.30.1200.10">
    <property type="entry name" value="YggU-like"/>
    <property type="match status" value="1"/>
</dbReference>
<dbReference type="HAMAP" id="MF_00634">
    <property type="entry name" value="UPF0235"/>
    <property type="match status" value="1"/>
</dbReference>
<dbReference type="InterPro" id="IPR003746">
    <property type="entry name" value="DUF167"/>
</dbReference>
<dbReference type="InterPro" id="IPR036591">
    <property type="entry name" value="YggU-like_sf"/>
</dbReference>
<dbReference type="NCBIfam" id="TIGR00251">
    <property type="entry name" value="DUF167 family protein"/>
    <property type="match status" value="1"/>
</dbReference>
<dbReference type="NCBIfam" id="NF002419">
    <property type="entry name" value="PRK01530.1"/>
    <property type="match status" value="1"/>
</dbReference>
<dbReference type="PANTHER" id="PTHR13420">
    <property type="entry name" value="UPF0235 PROTEIN C15ORF40"/>
    <property type="match status" value="1"/>
</dbReference>
<dbReference type="PANTHER" id="PTHR13420:SF7">
    <property type="entry name" value="UPF0235 PROTEIN C15ORF40"/>
    <property type="match status" value="1"/>
</dbReference>
<dbReference type="Pfam" id="PF02594">
    <property type="entry name" value="DUF167"/>
    <property type="match status" value="1"/>
</dbReference>
<dbReference type="SMART" id="SM01152">
    <property type="entry name" value="DUF167"/>
    <property type="match status" value="1"/>
</dbReference>
<dbReference type="SUPFAM" id="SSF69786">
    <property type="entry name" value="YggU-like"/>
    <property type="match status" value="1"/>
</dbReference>
<feature type="chain" id="PRO_0000139452" description="UPF0235 protein RC1301">
    <location>
        <begin position="1"/>
        <end position="105"/>
    </location>
</feature>
<protein>
    <recommendedName>
        <fullName evidence="1">UPF0235 protein RC1301</fullName>
    </recommendedName>
</protein>
<gene>
    <name type="ordered locus">RC1301</name>
</gene>
<proteinExistence type="inferred from homology"/>